<evidence type="ECO:0000255" key="1">
    <source>
        <dbReference type="HAMAP-Rule" id="MF_01270"/>
    </source>
</evidence>
<dbReference type="EC" id="2.7.1.170" evidence="1"/>
<dbReference type="EMBL" id="CP000097">
    <property type="protein sequence ID" value="ABB25348.1"/>
    <property type="molecule type" value="Genomic_DNA"/>
</dbReference>
<dbReference type="RefSeq" id="WP_011359203.1">
    <property type="nucleotide sequence ID" value="NC_007513.1"/>
</dbReference>
<dbReference type="SMR" id="Q3AZX9"/>
<dbReference type="STRING" id="316279.Syncc9902_0378"/>
<dbReference type="KEGG" id="sye:Syncc9902_0378"/>
<dbReference type="eggNOG" id="COG2377">
    <property type="taxonomic scope" value="Bacteria"/>
</dbReference>
<dbReference type="HOGENOM" id="CLU_038782_1_0_3"/>
<dbReference type="OrthoDB" id="9763949at2"/>
<dbReference type="UniPathway" id="UPA00343"/>
<dbReference type="UniPathway" id="UPA00544"/>
<dbReference type="Proteomes" id="UP000002712">
    <property type="component" value="Chromosome"/>
</dbReference>
<dbReference type="GO" id="GO:0005524">
    <property type="term" value="F:ATP binding"/>
    <property type="evidence" value="ECO:0007669"/>
    <property type="project" value="UniProtKB-UniRule"/>
</dbReference>
<dbReference type="GO" id="GO:0016301">
    <property type="term" value="F:kinase activity"/>
    <property type="evidence" value="ECO:0007669"/>
    <property type="project" value="UniProtKB-KW"/>
</dbReference>
<dbReference type="GO" id="GO:0016773">
    <property type="term" value="F:phosphotransferase activity, alcohol group as acceptor"/>
    <property type="evidence" value="ECO:0007669"/>
    <property type="project" value="UniProtKB-UniRule"/>
</dbReference>
<dbReference type="GO" id="GO:0097175">
    <property type="term" value="P:1,6-anhydro-N-acetyl-beta-muramic acid catabolic process"/>
    <property type="evidence" value="ECO:0007669"/>
    <property type="project" value="UniProtKB-UniRule"/>
</dbReference>
<dbReference type="GO" id="GO:0006040">
    <property type="term" value="P:amino sugar metabolic process"/>
    <property type="evidence" value="ECO:0007669"/>
    <property type="project" value="InterPro"/>
</dbReference>
<dbReference type="GO" id="GO:0009254">
    <property type="term" value="P:peptidoglycan turnover"/>
    <property type="evidence" value="ECO:0007669"/>
    <property type="project" value="UniProtKB-UniRule"/>
</dbReference>
<dbReference type="Gene3D" id="3.30.420.40">
    <property type="match status" value="2"/>
</dbReference>
<dbReference type="HAMAP" id="MF_01270">
    <property type="entry name" value="AnhMurNAc_kinase"/>
    <property type="match status" value="1"/>
</dbReference>
<dbReference type="InterPro" id="IPR005338">
    <property type="entry name" value="Anhydro_N_Ac-Mur_kinase"/>
</dbReference>
<dbReference type="InterPro" id="IPR043129">
    <property type="entry name" value="ATPase_NBD"/>
</dbReference>
<dbReference type="NCBIfam" id="NF007145">
    <property type="entry name" value="PRK09585.2-5"/>
    <property type="match status" value="1"/>
</dbReference>
<dbReference type="PANTHER" id="PTHR30605">
    <property type="entry name" value="ANHYDRO-N-ACETYLMURAMIC ACID KINASE"/>
    <property type="match status" value="1"/>
</dbReference>
<dbReference type="PANTHER" id="PTHR30605:SF0">
    <property type="entry name" value="ANHYDRO-N-ACETYLMURAMIC ACID KINASE"/>
    <property type="match status" value="1"/>
</dbReference>
<dbReference type="Pfam" id="PF03702">
    <property type="entry name" value="AnmK"/>
    <property type="match status" value="1"/>
</dbReference>
<dbReference type="SUPFAM" id="SSF53067">
    <property type="entry name" value="Actin-like ATPase domain"/>
    <property type="match status" value="1"/>
</dbReference>
<gene>
    <name evidence="1" type="primary">anmK</name>
    <name type="ordered locus">Syncc9902_0378</name>
</gene>
<feature type="chain" id="PRO_0000250070" description="Anhydro-N-acetylmuramic acid kinase">
    <location>
        <begin position="1"/>
        <end position="380"/>
    </location>
</feature>
<feature type="binding site" evidence="1">
    <location>
        <begin position="9"/>
        <end position="16"/>
    </location>
    <ligand>
        <name>ATP</name>
        <dbReference type="ChEBI" id="CHEBI:30616"/>
    </ligand>
</feature>
<protein>
    <recommendedName>
        <fullName evidence="1">Anhydro-N-acetylmuramic acid kinase</fullName>
        <ecNumber evidence="1">2.7.1.170</ecNumber>
    </recommendedName>
    <alternativeName>
        <fullName evidence="1">AnhMurNAc kinase</fullName>
    </alternativeName>
</protein>
<comment type="function">
    <text evidence="1">Catalyzes the specific phosphorylation of 1,6-anhydro-N-acetylmuramic acid (anhMurNAc) with the simultaneous cleavage of the 1,6-anhydro ring, generating MurNAc-6-P. Is required for the utilization of anhMurNAc either imported from the medium or derived from its own cell wall murein, and thus plays a role in cell wall recycling.</text>
</comment>
<comment type="catalytic activity">
    <reaction evidence="1">
        <text>1,6-anhydro-N-acetyl-beta-muramate + ATP + H2O = N-acetyl-D-muramate 6-phosphate + ADP + H(+)</text>
        <dbReference type="Rhea" id="RHEA:24952"/>
        <dbReference type="ChEBI" id="CHEBI:15377"/>
        <dbReference type="ChEBI" id="CHEBI:15378"/>
        <dbReference type="ChEBI" id="CHEBI:30616"/>
        <dbReference type="ChEBI" id="CHEBI:58690"/>
        <dbReference type="ChEBI" id="CHEBI:58722"/>
        <dbReference type="ChEBI" id="CHEBI:456216"/>
        <dbReference type="EC" id="2.7.1.170"/>
    </reaction>
</comment>
<comment type="pathway">
    <text evidence="1">Amino-sugar metabolism; 1,6-anhydro-N-acetylmuramate degradation.</text>
</comment>
<comment type="pathway">
    <text evidence="1">Cell wall biogenesis; peptidoglycan recycling.</text>
</comment>
<comment type="similarity">
    <text evidence="1">Belongs to the anhydro-N-acetylmuramic acid kinase family.</text>
</comment>
<organism>
    <name type="scientific">Synechococcus sp. (strain CC9902)</name>
    <dbReference type="NCBI Taxonomy" id="316279"/>
    <lineage>
        <taxon>Bacteria</taxon>
        <taxon>Bacillati</taxon>
        <taxon>Cyanobacteriota</taxon>
        <taxon>Cyanophyceae</taxon>
        <taxon>Synechococcales</taxon>
        <taxon>Synechococcaceae</taxon>
        <taxon>Synechococcus</taxon>
    </lineage>
</organism>
<name>ANMK_SYNS9</name>
<proteinExistence type="inferred from homology"/>
<reference key="1">
    <citation type="submission" date="2005-08" db="EMBL/GenBank/DDBJ databases">
        <title>Complete sequence of Synechococcus sp. CC9902.</title>
        <authorList>
            <person name="Copeland A."/>
            <person name="Lucas S."/>
            <person name="Lapidus A."/>
            <person name="Barry K."/>
            <person name="Detter J.C."/>
            <person name="Glavina T."/>
            <person name="Hammon N."/>
            <person name="Israni S."/>
            <person name="Pitluck S."/>
            <person name="Martinez M."/>
            <person name="Schmutz J."/>
            <person name="Larimer F."/>
            <person name="Land M."/>
            <person name="Kyrpides N."/>
            <person name="Ivanova N."/>
            <person name="Richardson P."/>
        </authorList>
    </citation>
    <scope>NUCLEOTIDE SEQUENCE [LARGE SCALE GENOMIC DNA]</scope>
    <source>
        <strain>CC9902</strain>
    </source>
</reference>
<accession>Q3AZX9</accession>
<sequence>MRCLGLMSGTSADGVDAVLADFRGSPNHPQWDLIRHVHHPYPEALRHRVVSAGQGEPSRADQWLDLAEAITEAQAMAARSCDPHAEAVLVGCHGQTIWHRPPTSQQRGASWQLLQAPLLAQLLERPVVHDFRAADLALGGQGAPLVPKADAALLGGTKGWRALLNLGGIANLTLIPPCCGPDRDASVQGWDCGPANSLIDLAVQQFSNGTLLFDRGGAMAKAGHSDETSIRRWLQEPYFQSPPPKSTGRELFGRANLQQRLNDLGRDCSSQDAVATLTSFSAAVVAQDLEQLMQRDRIRPLELIVAGGGRHNPVLMDQLQQRCRGLQLSSSQEMGLPVEAREALVFALLAWWHQRKHPGNSPSITGATRESVLGVLVHPG</sequence>
<keyword id="KW-0067">ATP-binding</keyword>
<keyword id="KW-0119">Carbohydrate metabolism</keyword>
<keyword id="KW-0418">Kinase</keyword>
<keyword id="KW-0547">Nucleotide-binding</keyword>
<keyword id="KW-1185">Reference proteome</keyword>
<keyword id="KW-0808">Transferase</keyword>